<protein>
    <recommendedName>
        <fullName evidence="1">Pantothenate kinase</fullName>
        <ecNumber evidence="1">2.7.1.33</ecNumber>
    </recommendedName>
    <alternativeName>
        <fullName evidence="1">Pantothenic acid kinase</fullName>
    </alternativeName>
</protein>
<name>COAA_ECOBW</name>
<keyword id="KW-0067">ATP-binding</keyword>
<keyword id="KW-0173">Coenzyme A biosynthesis</keyword>
<keyword id="KW-0963">Cytoplasm</keyword>
<keyword id="KW-0418">Kinase</keyword>
<keyword id="KW-0547">Nucleotide-binding</keyword>
<keyword id="KW-0808">Transferase</keyword>
<comment type="catalytic activity">
    <reaction evidence="1">
        <text>(R)-pantothenate + ATP = (R)-4'-phosphopantothenate + ADP + H(+)</text>
        <dbReference type="Rhea" id="RHEA:16373"/>
        <dbReference type="ChEBI" id="CHEBI:10986"/>
        <dbReference type="ChEBI" id="CHEBI:15378"/>
        <dbReference type="ChEBI" id="CHEBI:29032"/>
        <dbReference type="ChEBI" id="CHEBI:30616"/>
        <dbReference type="ChEBI" id="CHEBI:456216"/>
        <dbReference type="EC" id="2.7.1.33"/>
    </reaction>
</comment>
<comment type="pathway">
    <text evidence="1">Cofactor biosynthesis; coenzyme A biosynthesis; CoA from (R)-pantothenate: step 1/5.</text>
</comment>
<comment type="subcellular location">
    <subcellularLocation>
        <location evidence="1">Cytoplasm</location>
    </subcellularLocation>
</comment>
<comment type="similarity">
    <text evidence="1">Belongs to the prokaryotic pantothenate kinase family.</text>
</comment>
<accession>C5A0R9</accession>
<feature type="chain" id="PRO_1000204215" description="Pantothenate kinase">
    <location>
        <begin position="1"/>
        <end position="316"/>
    </location>
</feature>
<feature type="binding site" evidence="1">
    <location>
        <begin position="95"/>
        <end position="102"/>
    </location>
    <ligand>
        <name>ATP</name>
        <dbReference type="ChEBI" id="CHEBI:30616"/>
    </ligand>
</feature>
<sequence length="316" mass="36360">MSIKEQTLMTPYLQFDRNQWAALRDSVPMTLSEDEIARLKGINEDLSLEEVAEIYLPLSRLLNFYISSNLRRQAVLEQFLGTNGQRIPYIISIAGSVAVGKSTTARVLQALLSRWPEHRRVELITTDGFLHPNQVLKERGLMKKKGFPESYDMHRLVKFVSDLKSGVPNVTAPVYSHLIYDVIPDGDKTVVQPDILILEGLNVLQSGMDYPHDPHHVFVSDFVDFSIYVDAPEDLLQTWYINRFLKFREGAFTDPDSYFHNYAKLTKEEAIKTAMTLWKEINWLNLKQNILPTRERASLILTKSANHAVEEVRLRK</sequence>
<gene>
    <name evidence="1" type="primary">coaA</name>
    <name type="ordered locus">BWG_3638</name>
</gene>
<dbReference type="EC" id="2.7.1.33" evidence="1"/>
<dbReference type="EMBL" id="CP001396">
    <property type="protein sequence ID" value="ACR63972.1"/>
    <property type="molecule type" value="Genomic_DNA"/>
</dbReference>
<dbReference type="RefSeq" id="WP_000023081.1">
    <property type="nucleotide sequence ID" value="NC_012759.1"/>
</dbReference>
<dbReference type="SMR" id="C5A0R9"/>
<dbReference type="GeneID" id="93777919"/>
<dbReference type="KEGG" id="ebw:BWG_3638"/>
<dbReference type="HOGENOM" id="CLU_053818_1_1_6"/>
<dbReference type="UniPathway" id="UPA00241">
    <property type="reaction ID" value="UER00352"/>
</dbReference>
<dbReference type="GO" id="GO:0005737">
    <property type="term" value="C:cytoplasm"/>
    <property type="evidence" value="ECO:0007669"/>
    <property type="project" value="UniProtKB-SubCell"/>
</dbReference>
<dbReference type="GO" id="GO:0005524">
    <property type="term" value="F:ATP binding"/>
    <property type="evidence" value="ECO:0007669"/>
    <property type="project" value="UniProtKB-UniRule"/>
</dbReference>
<dbReference type="GO" id="GO:0004594">
    <property type="term" value="F:pantothenate kinase activity"/>
    <property type="evidence" value="ECO:0007669"/>
    <property type="project" value="UniProtKB-UniRule"/>
</dbReference>
<dbReference type="GO" id="GO:0015937">
    <property type="term" value="P:coenzyme A biosynthetic process"/>
    <property type="evidence" value="ECO:0007669"/>
    <property type="project" value="UniProtKB-UniRule"/>
</dbReference>
<dbReference type="CDD" id="cd02025">
    <property type="entry name" value="PanK"/>
    <property type="match status" value="1"/>
</dbReference>
<dbReference type="FunFam" id="3.40.50.300:FF:000242">
    <property type="entry name" value="Pantothenate kinase"/>
    <property type="match status" value="1"/>
</dbReference>
<dbReference type="Gene3D" id="3.40.50.300">
    <property type="entry name" value="P-loop containing nucleotide triphosphate hydrolases"/>
    <property type="match status" value="1"/>
</dbReference>
<dbReference type="HAMAP" id="MF_00215">
    <property type="entry name" value="Pantothen_kinase_1"/>
    <property type="match status" value="1"/>
</dbReference>
<dbReference type="InterPro" id="IPR027417">
    <property type="entry name" value="P-loop_NTPase"/>
</dbReference>
<dbReference type="InterPro" id="IPR004566">
    <property type="entry name" value="PanK"/>
</dbReference>
<dbReference type="InterPro" id="IPR006083">
    <property type="entry name" value="PRK/URK"/>
</dbReference>
<dbReference type="NCBIfam" id="TIGR00554">
    <property type="entry name" value="panK_bact"/>
    <property type="match status" value="1"/>
</dbReference>
<dbReference type="PANTHER" id="PTHR10285">
    <property type="entry name" value="URIDINE KINASE"/>
    <property type="match status" value="1"/>
</dbReference>
<dbReference type="Pfam" id="PF00485">
    <property type="entry name" value="PRK"/>
    <property type="match status" value="1"/>
</dbReference>
<dbReference type="PIRSF" id="PIRSF000545">
    <property type="entry name" value="Pantothenate_kin"/>
    <property type="match status" value="1"/>
</dbReference>
<dbReference type="SUPFAM" id="SSF52540">
    <property type="entry name" value="P-loop containing nucleoside triphosphate hydrolases"/>
    <property type="match status" value="1"/>
</dbReference>
<reference key="1">
    <citation type="journal article" date="2009" name="J. Bacteriol.">
        <title>Genomic sequencing reveals regulatory mutations and recombinational events in the widely used MC4100 lineage of Escherichia coli K-12.</title>
        <authorList>
            <person name="Ferenci T."/>
            <person name="Zhou Z."/>
            <person name="Betteridge T."/>
            <person name="Ren Y."/>
            <person name="Liu Y."/>
            <person name="Feng L."/>
            <person name="Reeves P.R."/>
            <person name="Wang L."/>
        </authorList>
    </citation>
    <scope>NUCLEOTIDE SEQUENCE [LARGE SCALE GENOMIC DNA]</scope>
    <source>
        <strain>K12 / MC4100 / BW2952</strain>
    </source>
</reference>
<proteinExistence type="inferred from homology"/>
<evidence type="ECO:0000255" key="1">
    <source>
        <dbReference type="HAMAP-Rule" id="MF_00215"/>
    </source>
</evidence>
<organism>
    <name type="scientific">Escherichia coli (strain K12 / MC4100 / BW2952)</name>
    <dbReference type="NCBI Taxonomy" id="595496"/>
    <lineage>
        <taxon>Bacteria</taxon>
        <taxon>Pseudomonadati</taxon>
        <taxon>Pseudomonadota</taxon>
        <taxon>Gammaproteobacteria</taxon>
        <taxon>Enterobacterales</taxon>
        <taxon>Enterobacteriaceae</taxon>
        <taxon>Escherichia</taxon>
    </lineage>
</organism>